<evidence type="ECO:0000255" key="1">
    <source>
        <dbReference type="HAMAP-Rule" id="MF_00373"/>
    </source>
</evidence>
<evidence type="ECO:0000305" key="2"/>
<evidence type="ECO:0007829" key="3">
    <source>
        <dbReference type="PDB" id="2ZJR"/>
    </source>
</evidence>
<evidence type="ECO:0007829" key="4">
    <source>
        <dbReference type="PDB" id="4IO9"/>
    </source>
</evidence>
<evidence type="ECO:0007829" key="5">
    <source>
        <dbReference type="PDB" id="5DM6"/>
    </source>
</evidence>
<evidence type="ECO:0007829" key="6">
    <source>
        <dbReference type="PDB" id="7A0S"/>
    </source>
</evidence>
<proteinExistence type="evidence at protein level"/>
<comment type="subunit">
    <text>Part of the 50S ribosomal subunit.</text>
</comment>
<comment type="similarity">
    <text evidence="1">Belongs to the bacterial ribosomal protein bL28 family.</text>
</comment>
<protein>
    <recommendedName>
        <fullName evidence="1">Large ribosomal subunit protein bL28</fullName>
    </recommendedName>
    <alternativeName>
        <fullName evidence="2">50S ribosomal protein L28</fullName>
    </alternativeName>
</protein>
<gene>
    <name evidence="1" type="primary">rpmB</name>
    <name type="ordered locus">DR_2524</name>
</gene>
<keyword id="KW-0002">3D-structure</keyword>
<keyword id="KW-1185">Reference proteome</keyword>
<keyword id="KW-0687">Ribonucleoprotein</keyword>
<keyword id="KW-0689">Ribosomal protein</keyword>
<feature type="chain" id="PRO_0000178465" description="Large ribosomal subunit protein bL28">
    <location>
        <begin position="1"/>
        <end position="81"/>
    </location>
</feature>
<feature type="strand" evidence="5">
    <location>
        <begin position="10"/>
        <end position="12"/>
    </location>
</feature>
<feature type="strand" evidence="6">
    <location>
        <begin position="18"/>
        <end position="20"/>
    </location>
</feature>
<feature type="strand" evidence="3">
    <location>
        <begin position="23"/>
        <end position="25"/>
    </location>
</feature>
<feature type="strand" evidence="5">
    <location>
        <begin position="28"/>
        <end position="33"/>
    </location>
</feature>
<feature type="strand" evidence="4">
    <location>
        <begin position="36"/>
        <end position="38"/>
    </location>
</feature>
<feature type="strand" evidence="6">
    <location>
        <begin position="41"/>
        <end position="43"/>
    </location>
</feature>
<feature type="strand" evidence="5">
    <location>
        <begin position="54"/>
        <end position="56"/>
    </location>
</feature>
<feature type="helix" evidence="5">
    <location>
        <begin position="64"/>
        <end position="72"/>
    </location>
</feature>
<feature type="strand" evidence="5">
    <location>
        <begin position="75"/>
        <end position="77"/>
    </location>
</feature>
<name>RL28_DEIRA</name>
<sequence>MSRECYLTGKKNLVVNSVIRRGKARADGGVGRKTTGITKRVQRANLHKKAIRENGQVKTVWLSANALRTLSKGPYKGIELI</sequence>
<dbReference type="EMBL" id="AE000513">
    <property type="protein sequence ID" value="AAF12065.1"/>
    <property type="molecule type" value="Genomic_DNA"/>
</dbReference>
<dbReference type="PIR" id="C75262">
    <property type="entry name" value="C75262"/>
</dbReference>
<dbReference type="RefSeq" id="NP_296244.1">
    <property type="nucleotide sequence ID" value="NC_001263.1"/>
</dbReference>
<dbReference type="RefSeq" id="WP_010889149.1">
    <property type="nucleotide sequence ID" value="NC_001263.1"/>
</dbReference>
<dbReference type="PDB" id="2ZJP">
    <property type="method" value="X-ray"/>
    <property type="resolution" value="3.70 A"/>
    <property type="chains" value="U=1-81"/>
</dbReference>
<dbReference type="PDB" id="2ZJQ">
    <property type="method" value="X-ray"/>
    <property type="resolution" value="3.30 A"/>
    <property type="chains" value="U=1-81"/>
</dbReference>
<dbReference type="PDB" id="2ZJR">
    <property type="method" value="X-ray"/>
    <property type="resolution" value="2.91 A"/>
    <property type="chains" value="U=1-81"/>
</dbReference>
<dbReference type="PDB" id="3CF5">
    <property type="method" value="X-ray"/>
    <property type="resolution" value="3.30 A"/>
    <property type="chains" value="U=1-81"/>
</dbReference>
<dbReference type="PDB" id="3DLL">
    <property type="method" value="X-ray"/>
    <property type="resolution" value="3.50 A"/>
    <property type="chains" value="U=1-81"/>
</dbReference>
<dbReference type="PDB" id="3PIO">
    <property type="method" value="X-ray"/>
    <property type="resolution" value="3.25 A"/>
    <property type="chains" value="U=1-81"/>
</dbReference>
<dbReference type="PDB" id="3PIP">
    <property type="method" value="X-ray"/>
    <property type="resolution" value="3.45 A"/>
    <property type="chains" value="U=1-81"/>
</dbReference>
<dbReference type="PDB" id="4IO9">
    <property type="method" value="X-ray"/>
    <property type="resolution" value="3.20 A"/>
    <property type="chains" value="U=1-81"/>
</dbReference>
<dbReference type="PDB" id="4IOA">
    <property type="method" value="X-ray"/>
    <property type="resolution" value="3.20 A"/>
    <property type="chains" value="U=1-81"/>
</dbReference>
<dbReference type="PDB" id="4IOC">
    <property type="method" value="X-ray"/>
    <property type="resolution" value="3.60 A"/>
    <property type="chains" value="U=1-81"/>
</dbReference>
<dbReference type="PDB" id="4U67">
    <property type="method" value="X-ray"/>
    <property type="resolution" value="3.65 A"/>
    <property type="chains" value="U=1-81"/>
</dbReference>
<dbReference type="PDB" id="4WFN">
    <property type="method" value="X-ray"/>
    <property type="resolution" value="3.54 A"/>
    <property type="chains" value="U=1-81"/>
</dbReference>
<dbReference type="PDB" id="5DM6">
    <property type="method" value="X-ray"/>
    <property type="resolution" value="2.90 A"/>
    <property type="chains" value="U=8-79"/>
</dbReference>
<dbReference type="PDB" id="5DM7">
    <property type="method" value="X-ray"/>
    <property type="resolution" value="3.00 A"/>
    <property type="chains" value="U=8-79"/>
</dbReference>
<dbReference type="PDB" id="5JVG">
    <property type="method" value="X-ray"/>
    <property type="resolution" value="3.43 A"/>
    <property type="chains" value="U=1-81"/>
</dbReference>
<dbReference type="PDB" id="5JVH">
    <property type="method" value="X-ray"/>
    <property type="resolution" value="3.58 A"/>
    <property type="chains" value="U=1-81"/>
</dbReference>
<dbReference type="PDB" id="7A0R">
    <property type="method" value="X-ray"/>
    <property type="resolution" value="3.30 A"/>
    <property type="chains" value="U=6-79"/>
</dbReference>
<dbReference type="PDB" id="7A0S">
    <property type="method" value="X-ray"/>
    <property type="resolution" value="3.22 A"/>
    <property type="chains" value="U=6-79"/>
</dbReference>
<dbReference type="PDB" id="7A18">
    <property type="method" value="X-ray"/>
    <property type="resolution" value="3.40 A"/>
    <property type="chains" value="U=6-79"/>
</dbReference>
<dbReference type="PDBsum" id="2ZJP"/>
<dbReference type="PDBsum" id="2ZJQ"/>
<dbReference type="PDBsum" id="2ZJR"/>
<dbReference type="PDBsum" id="3CF5"/>
<dbReference type="PDBsum" id="3DLL"/>
<dbReference type="PDBsum" id="3PIO"/>
<dbReference type="PDBsum" id="3PIP"/>
<dbReference type="PDBsum" id="4IO9"/>
<dbReference type="PDBsum" id="4IOA"/>
<dbReference type="PDBsum" id="4IOC"/>
<dbReference type="PDBsum" id="4U67"/>
<dbReference type="PDBsum" id="4WFN"/>
<dbReference type="PDBsum" id="5DM6"/>
<dbReference type="PDBsum" id="5DM7"/>
<dbReference type="PDBsum" id="5JVG"/>
<dbReference type="PDBsum" id="5JVH"/>
<dbReference type="PDBsum" id="7A0R"/>
<dbReference type="PDBsum" id="7A0S"/>
<dbReference type="PDBsum" id="7A18"/>
<dbReference type="SMR" id="Q9RRG8"/>
<dbReference type="IntAct" id="Q9RRG8">
    <property type="interactions" value="1"/>
</dbReference>
<dbReference type="STRING" id="243230.DR_2524"/>
<dbReference type="PaxDb" id="243230-DR_2524"/>
<dbReference type="EnsemblBacteria" id="AAF12065">
    <property type="protein sequence ID" value="AAF12065"/>
    <property type="gene ID" value="DR_2524"/>
</dbReference>
<dbReference type="GeneID" id="69518777"/>
<dbReference type="KEGG" id="dra:DR_2524"/>
<dbReference type="PATRIC" id="fig|243230.17.peg.2766"/>
<dbReference type="eggNOG" id="COG0227">
    <property type="taxonomic scope" value="Bacteria"/>
</dbReference>
<dbReference type="HOGENOM" id="CLU_064548_6_0_0"/>
<dbReference type="InParanoid" id="Q9RRG8"/>
<dbReference type="OrthoDB" id="9805609at2"/>
<dbReference type="EvolutionaryTrace" id="Q9RRG8"/>
<dbReference type="Proteomes" id="UP000002524">
    <property type="component" value="Chromosome 1"/>
</dbReference>
<dbReference type="GO" id="GO:1990904">
    <property type="term" value="C:ribonucleoprotein complex"/>
    <property type="evidence" value="ECO:0007669"/>
    <property type="project" value="UniProtKB-KW"/>
</dbReference>
<dbReference type="GO" id="GO:0005840">
    <property type="term" value="C:ribosome"/>
    <property type="evidence" value="ECO:0007669"/>
    <property type="project" value="UniProtKB-KW"/>
</dbReference>
<dbReference type="GO" id="GO:0003735">
    <property type="term" value="F:structural constituent of ribosome"/>
    <property type="evidence" value="ECO:0007669"/>
    <property type="project" value="InterPro"/>
</dbReference>
<dbReference type="GO" id="GO:0006412">
    <property type="term" value="P:translation"/>
    <property type="evidence" value="ECO:0007669"/>
    <property type="project" value="UniProtKB-UniRule"/>
</dbReference>
<dbReference type="Gene3D" id="2.30.170.40">
    <property type="entry name" value="Ribosomal protein L28/L24"/>
    <property type="match status" value="1"/>
</dbReference>
<dbReference type="HAMAP" id="MF_00373">
    <property type="entry name" value="Ribosomal_bL28"/>
    <property type="match status" value="1"/>
</dbReference>
<dbReference type="InterPro" id="IPR050096">
    <property type="entry name" value="Bacterial_rp_bL28"/>
</dbReference>
<dbReference type="InterPro" id="IPR026569">
    <property type="entry name" value="Ribosomal_bL28"/>
</dbReference>
<dbReference type="InterPro" id="IPR034704">
    <property type="entry name" value="Ribosomal_bL28/bL31-like_sf"/>
</dbReference>
<dbReference type="InterPro" id="IPR001383">
    <property type="entry name" value="Ribosomal_bL28_bact-type"/>
</dbReference>
<dbReference type="InterPro" id="IPR037147">
    <property type="entry name" value="Ribosomal_bL28_sf"/>
</dbReference>
<dbReference type="NCBIfam" id="TIGR00009">
    <property type="entry name" value="L28"/>
    <property type="match status" value="1"/>
</dbReference>
<dbReference type="PANTHER" id="PTHR39080">
    <property type="entry name" value="50S RIBOSOMAL PROTEIN L28"/>
    <property type="match status" value="1"/>
</dbReference>
<dbReference type="PANTHER" id="PTHR39080:SF1">
    <property type="entry name" value="LARGE RIBOSOMAL SUBUNIT PROTEIN BL28A"/>
    <property type="match status" value="1"/>
</dbReference>
<dbReference type="Pfam" id="PF00830">
    <property type="entry name" value="Ribosomal_L28"/>
    <property type="match status" value="1"/>
</dbReference>
<dbReference type="SUPFAM" id="SSF143800">
    <property type="entry name" value="L28p-like"/>
    <property type="match status" value="1"/>
</dbReference>
<reference key="1">
    <citation type="journal article" date="1999" name="Science">
        <title>Genome sequence of the radioresistant bacterium Deinococcus radiodurans R1.</title>
        <authorList>
            <person name="White O."/>
            <person name="Eisen J.A."/>
            <person name="Heidelberg J.F."/>
            <person name="Hickey E.K."/>
            <person name="Peterson J.D."/>
            <person name="Dodson R.J."/>
            <person name="Haft D.H."/>
            <person name="Gwinn M.L."/>
            <person name="Nelson W.C."/>
            <person name="Richardson D.L."/>
            <person name="Moffat K.S."/>
            <person name="Qin H."/>
            <person name="Jiang L."/>
            <person name="Pamphile W."/>
            <person name="Crosby M."/>
            <person name="Shen M."/>
            <person name="Vamathevan J.J."/>
            <person name="Lam P."/>
            <person name="McDonald L.A."/>
            <person name="Utterback T.R."/>
            <person name="Zalewski C."/>
            <person name="Makarova K.S."/>
            <person name="Aravind L."/>
            <person name="Daly M.J."/>
            <person name="Minton K.W."/>
            <person name="Fleischmann R.D."/>
            <person name="Ketchum K.A."/>
            <person name="Nelson K.E."/>
            <person name="Salzberg S.L."/>
            <person name="Smith H.O."/>
            <person name="Venter J.C."/>
            <person name="Fraser C.M."/>
        </authorList>
    </citation>
    <scope>NUCLEOTIDE SEQUENCE [LARGE SCALE GENOMIC DNA]</scope>
    <source>
        <strain>ATCC 13939 / DSM 20539 / JCM 16871 / CCUG 27074 / LMG 4051 / NBRC 15346 / NCIMB 9279 / VKM B-1422 / R1</strain>
    </source>
</reference>
<accession>Q9RRG8</accession>
<organism>
    <name type="scientific">Deinococcus radiodurans (strain ATCC 13939 / DSM 20539 / JCM 16871 / CCUG 27074 / LMG 4051 / NBRC 15346 / NCIMB 9279 / VKM B-1422 / R1)</name>
    <dbReference type="NCBI Taxonomy" id="243230"/>
    <lineage>
        <taxon>Bacteria</taxon>
        <taxon>Thermotogati</taxon>
        <taxon>Deinococcota</taxon>
        <taxon>Deinococci</taxon>
        <taxon>Deinococcales</taxon>
        <taxon>Deinococcaceae</taxon>
        <taxon>Deinococcus</taxon>
    </lineage>
</organism>